<keyword id="KW-0150">Chloroplast</keyword>
<keyword id="KW-0934">Plastid</keyword>
<keyword id="KW-0687">Ribonucleoprotein</keyword>
<keyword id="KW-0689">Ribosomal protein</keyword>
<keyword id="KW-0694">RNA-binding</keyword>
<keyword id="KW-0699">rRNA-binding</keyword>
<name>RR11_PYRYE</name>
<organism>
    <name type="scientific">Pyropia yezoensis</name>
    <name type="common">Susabi-nori</name>
    <name type="synonym">Porphyra yezoensis</name>
    <dbReference type="NCBI Taxonomy" id="2788"/>
    <lineage>
        <taxon>Eukaryota</taxon>
        <taxon>Rhodophyta</taxon>
        <taxon>Bangiophyceae</taxon>
        <taxon>Bangiales</taxon>
        <taxon>Bangiaceae</taxon>
        <taxon>Pyropia</taxon>
    </lineage>
</organism>
<comment type="subunit">
    <text evidence="1">Part of the 30S ribosomal subunit.</text>
</comment>
<comment type="subcellular location">
    <subcellularLocation>
        <location>Plastid</location>
        <location>Chloroplast</location>
    </subcellularLocation>
</comment>
<comment type="similarity">
    <text evidence="1">Belongs to the universal ribosomal protein uS11 family.</text>
</comment>
<dbReference type="EMBL" id="DQ995194">
    <property type="protein sequence ID" value="ABJ91309.1"/>
    <property type="molecule type" value="Genomic_DNA"/>
</dbReference>
<dbReference type="EMBL" id="AP006715">
    <property type="protein sequence ID" value="BAE92417.1"/>
    <property type="molecule type" value="Genomic_DNA"/>
</dbReference>
<dbReference type="RefSeq" id="YP_536974.1">
    <property type="nucleotide sequence ID" value="NC_007932.1"/>
</dbReference>
<dbReference type="SMR" id="Q1XDJ4"/>
<dbReference type="GeneID" id="3978738"/>
<dbReference type="GO" id="GO:0009507">
    <property type="term" value="C:chloroplast"/>
    <property type="evidence" value="ECO:0007669"/>
    <property type="project" value="UniProtKB-SubCell"/>
</dbReference>
<dbReference type="GO" id="GO:1990904">
    <property type="term" value="C:ribonucleoprotein complex"/>
    <property type="evidence" value="ECO:0007669"/>
    <property type="project" value="UniProtKB-KW"/>
</dbReference>
<dbReference type="GO" id="GO:0005840">
    <property type="term" value="C:ribosome"/>
    <property type="evidence" value="ECO:0007669"/>
    <property type="project" value="UniProtKB-KW"/>
</dbReference>
<dbReference type="GO" id="GO:0019843">
    <property type="term" value="F:rRNA binding"/>
    <property type="evidence" value="ECO:0007669"/>
    <property type="project" value="UniProtKB-UniRule"/>
</dbReference>
<dbReference type="GO" id="GO:0003735">
    <property type="term" value="F:structural constituent of ribosome"/>
    <property type="evidence" value="ECO:0007669"/>
    <property type="project" value="InterPro"/>
</dbReference>
<dbReference type="GO" id="GO:0006412">
    <property type="term" value="P:translation"/>
    <property type="evidence" value="ECO:0007669"/>
    <property type="project" value="UniProtKB-UniRule"/>
</dbReference>
<dbReference type="FunFam" id="3.30.420.80:FF:000001">
    <property type="entry name" value="30S ribosomal protein S11"/>
    <property type="match status" value="1"/>
</dbReference>
<dbReference type="Gene3D" id="3.30.420.80">
    <property type="entry name" value="Ribosomal protein S11"/>
    <property type="match status" value="1"/>
</dbReference>
<dbReference type="HAMAP" id="MF_01310">
    <property type="entry name" value="Ribosomal_uS11"/>
    <property type="match status" value="1"/>
</dbReference>
<dbReference type="InterPro" id="IPR001971">
    <property type="entry name" value="Ribosomal_uS11"/>
</dbReference>
<dbReference type="InterPro" id="IPR019981">
    <property type="entry name" value="Ribosomal_uS11_bac-type"/>
</dbReference>
<dbReference type="InterPro" id="IPR018102">
    <property type="entry name" value="Ribosomal_uS11_CS"/>
</dbReference>
<dbReference type="InterPro" id="IPR036967">
    <property type="entry name" value="Ribosomal_uS11_sf"/>
</dbReference>
<dbReference type="NCBIfam" id="NF003698">
    <property type="entry name" value="PRK05309.1"/>
    <property type="match status" value="1"/>
</dbReference>
<dbReference type="NCBIfam" id="TIGR03632">
    <property type="entry name" value="uS11_bact"/>
    <property type="match status" value="1"/>
</dbReference>
<dbReference type="PANTHER" id="PTHR11759">
    <property type="entry name" value="40S RIBOSOMAL PROTEIN S14/30S RIBOSOMAL PROTEIN S11"/>
    <property type="match status" value="1"/>
</dbReference>
<dbReference type="Pfam" id="PF00411">
    <property type="entry name" value="Ribosomal_S11"/>
    <property type="match status" value="1"/>
</dbReference>
<dbReference type="PIRSF" id="PIRSF002131">
    <property type="entry name" value="Ribosomal_S11"/>
    <property type="match status" value="1"/>
</dbReference>
<dbReference type="SUPFAM" id="SSF53137">
    <property type="entry name" value="Translational machinery components"/>
    <property type="match status" value="1"/>
</dbReference>
<dbReference type="PROSITE" id="PS00054">
    <property type="entry name" value="RIBOSOMAL_S11"/>
    <property type="match status" value="1"/>
</dbReference>
<evidence type="ECO:0000255" key="1">
    <source>
        <dbReference type="HAMAP-Rule" id="MF_01310"/>
    </source>
</evidence>
<evidence type="ECO:0000305" key="2"/>
<gene>
    <name evidence="1" type="primary">rps11</name>
</gene>
<feature type="chain" id="PRO_0000276660" description="Small ribosomal subunit protein uS11c">
    <location>
        <begin position="1"/>
        <end position="130"/>
    </location>
</feature>
<proteinExistence type="inferred from homology"/>
<protein>
    <recommendedName>
        <fullName evidence="1">Small ribosomal subunit protein uS11c</fullName>
    </recommendedName>
    <alternativeName>
        <fullName evidence="2">30S ribosomal protein S11, chloroplastic</fullName>
    </alternativeName>
</protein>
<sequence length="130" mass="13837">MARQIKKSGARKTKRNAVNGITHIKSTFNNTIVTITNLKGETLSWSSSGASGFKGAKKGTPFAAQTAAEKAARQAMDQGMRQTEVLVNGPGAGRETAIRALQAAGLEITLIKDITPVPHNGCRPPKKRRV</sequence>
<geneLocation type="chloroplast"/>
<reference key="1">
    <citation type="submission" date="2006-09" db="EMBL/GenBank/DDBJ databases">
        <title>Cloning and analysis of the Porphyra yezoensis gene for rps11.</title>
        <authorList>
            <person name="Wang M.Q."/>
            <person name="Mao Y.X."/>
        </authorList>
    </citation>
    <scope>NUCLEOTIDE SEQUENCE [GENOMIC DNA]</scope>
    <source>
        <strain>Qingdao</strain>
    </source>
</reference>
<reference key="2">
    <citation type="submission" date="2003-11" db="EMBL/GenBank/DDBJ databases">
        <title>Whole genome sequence of Porphyra yezoensis chloroplast.</title>
        <authorList>
            <person name="Kunimoto M."/>
            <person name="Morishima K."/>
            <person name="Yoshikawa M."/>
            <person name="Fukuda S."/>
            <person name="Kobayashi T."/>
            <person name="Kobayashi M."/>
            <person name="Okazaki T."/>
            <person name="Ohara I."/>
            <person name="Nakayama I."/>
        </authorList>
    </citation>
    <scope>NUCLEOTIDE SEQUENCE [LARGE SCALE GENOMIC DNA]</scope>
    <source>
        <strain>U-51</strain>
    </source>
</reference>
<accession>Q1XDJ4</accession>